<evidence type="ECO:0000255" key="1">
    <source>
        <dbReference type="HAMAP-Rule" id="MF_00050"/>
    </source>
</evidence>
<organism>
    <name type="scientific">Staphylococcus aureus (strain JH1)</name>
    <dbReference type="NCBI Taxonomy" id="359787"/>
    <lineage>
        <taxon>Bacteria</taxon>
        <taxon>Bacillati</taxon>
        <taxon>Bacillota</taxon>
        <taxon>Bacilli</taxon>
        <taxon>Bacillales</taxon>
        <taxon>Staphylococcaceae</taxon>
        <taxon>Staphylococcus</taxon>
    </lineage>
</organism>
<protein>
    <recommendedName>
        <fullName evidence="1">Elongation factor Ts</fullName>
        <shortName evidence="1">EF-Ts</shortName>
    </recommendedName>
</protein>
<dbReference type="EMBL" id="CP000736">
    <property type="protein sequence ID" value="ABR52194.1"/>
    <property type="molecule type" value="Genomic_DNA"/>
</dbReference>
<dbReference type="SMR" id="A6U176"/>
<dbReference type="KEGG" id="sah:SaurJH1_1343"/>
<dbReference type="HOGENOM" id="CLU_047155_0_2_9"/>
<dbReference type="GO" id="GO:0005737">
    <property type="term" value="C:cytoplasm"/>
    <property type="evidence" value="ECO:0007669"/>
    <property type="project" value="UniProtKB-SubCell"/>
</dbReference>
<dbReference type="GO" id="GO:0003746">
    <property type="term" value="F:translation elongation factor activity"/>
    <property type="evidence" value="ECO:0007669"/>
    <property type="project" value="UniProtKB-UniRule"/>
</dbReference>
<dbReference type="CDD" id="cd14275">
    <property type="entry name" value="UBA_EF-Ts"/>
    <property type="match status" value="1"/>
</dbReference>
<dbReference type="FunFam" id="1.10.286.20:FF:000003">
    <property type="entry name" value="Elongation factor Ts"/>
    <property type="match status" value="1"/>
</dbReference>
<dbReference type="FunFam" id="1.10.8.10:FF:000001">
    <property type="entry name" value="Elongation factor Ts"/>
    <property type="match status" value="1"/>
</dbReference>
<dbReference type="FunFam" id="3.30.479.20:FF:000005">
    <property type="entry name" value="Elongation factor Ts"/>
    <property type="match status" value="1"/>
</dbReference>
<dbReference type="Gene3D" id="1.10.286.20">
    <property type="match status" value="1"/>
</dbReference>
<dbReference type="Gene3D" id="1.10.8.10">
    <property type="entry name" value="DNA helicase RuvA subunit, C-terminal domain"/>
    <property type="match status" value="1"/>
</dbReference>
<dbReference type="Gene3D" id="3.30.479.20">
    <property type="entry name" value="Elongation factor Ts, dimerisation domain"/>
    <property type="match status" value="2"/>
</dbReference>
<dbReference type="HAMAP" id="MF_00050">
    <property type="entry name" value="EF_Ts"/>
    <property type="match status" value="1"/>
</dbReference>
<dbReference type="InterPro" id="IPR036402">
    <property type="entry name" value="EF-Ts_dimer_sf"/>
</dbReference>
<dbReference type="InterPro" id="IPR001816">
    <property type="entry name" value="Transl_elong_EFTs/EF1B"/>
</dbReference>
<dbReference type="InterPro" id="IPR014039">
    <property type="entry name" value="Transl_elong_EFTs/EF1B_dimer"/>
</dbReference>
<dbReference type="InterPro" id="IPR018101">
    <property type="entry name" value="Transl_elong_Ts_CS"/>
</dbReference>
<dbReference type="InterPro" id="IPR009060">
    <property type="entry name" value="UBA-like_sf"/>
</dbReference>
<dbReference type="NCBIfam" id="TIGR00116">
    <property type="entry name" value="tsf"/>
    <property type="match status" value="1"/>
</dbReference>
<dbReference type="PANTHER" id="PTHR11741">
    <property type="entry name" value="ELONGATION FACTOR TS"/>
    <property type="match status" value="1"/>
</dbReference>
<dbReference type="PANTHER" id="PTHR11741:SF0">
    <property type="entry name" value="ELONGATION FACTOR TS, MITOCHONDRIAL"/>
    <property type="match status" value="1"/>
</dbReference>
<dbReference type="Pfam" id="PF00889">
    <property type="entry name" value="EF_TS"/>
    <property type="match status" value="1"/>
</dbReference>
<dbReference type="SUPFAM" id="SSF54713">
    <property type="entry name" value="Elongation factor Ts (EF-Ts), dimerisation domain"/>
    <property type="match status" value="2"/>
</dbReference>
<dbReference type="SUPFAM" id="SSF46934">
    <property type="entry name" value="UBA-like"/>
    <property type="match status" value="1"/>
</dbReference>
<dbReference type="PROSITE" id="PS01126">
    <property type="entry name" value="EF_TS_1"/>
    <property type="match status" value="1"/>
</dbReference>
<dbReference type="PROSITE" id="PS01127">
    <property type="entry name" value="EF_TS_2"/>
    <property type="match status" value="1"/>
</dbReference>
<gene>
    <name evidence="1" type="primary">tsf</name>
    <name type="ordered locus">SaurJH1_1343</name>
</gene>
<keyword id="KW-0963">Cytoplasm</keyword>
<keyword id="KW-0251">Elongation factor</keyword>
<keyword id="KW-0648">Protein biosynthesis</keyword>
<accession>A6U176</accession>
<name>EFTS_STAA2</name>
<feature type="chain" id="PRO_1000074882" description="Elongation factor Ts">
    <location>
        <begin position="1"/>
        <end position="293"/>
    </location>
</feature>
<feature type="region of interest" description="Involved in Mg(2+) ion dislocation from EF-Tu" evidence="1">
    <location>
        <begin position="80"/>
        <end position="83"/>
    </location>
</feature>
<comment type="function">
    <text evidence="1">Associates with the EF-Tu.GDP complex and induces the exchange of GDP to GTP. It remains bound to the aminoacyl-tRNA.EF-Tu.GTP complex up to the GTP hydrolysis stage on the ribosome.</text>
</comment>
<comment type="subcellular location">
    <subcellularLocation>
        <location evidence="1">Cytoplasm</location>
    </subcellularLocation>
</comment>
<comment type="similarity">
    <text evidence="1">Belongs to the EF-Ts family.</text>
</comment>
<proteinExistence type="inferred from homology"/>
<sequence length="293" mass="32493">MATISAKLVKELRKKTGAGMMDCKKALTETDGDIDKAIDYLREKGIAKAAKKADRIAAEGLVHVETKGNDAVIVEINSETDFVARNEGFQELVKEIANQVLDTKAETVEALMETTLPNGKSVDERIKEAISTIGEKLSVRRFAIRTKTDNDAFGAYLHMGGRIGVLTVVEGSTDEEAARDVAMHIAAINPKYVSSEQVSEEEINHEREVLKQQALNEGKPENIVEKMVEGRLRKYLQEICAVDQDFVKNPDVTVEAFLKTKGGKLVDFVRYEVGEGMEKREENFADEVKGQMK</sequence>
<reference key="1">
    <citation type="submission" date="2007-06" db="EMBL/GenBank/DDBJ databases">
        <title>Complete sequence of chromosome of Staphylococcus aureus subsp. aureus JH1.</title>
        <authorList>
            <consortium name="US DOE Joint Genome Institute"/>
            <person name="Copeland A."/>
            <person name="Lucas S."/>
            <person name="Lapidus A."/>
            <person name="Barry K."/>
            <person name="Detter J.C."/>
            <person name="Glavina del Rio T."/>
            <person name="Hammon N."/>
            <person name="Israni S."/>
            <person name="Dalin E."/>
            <person name="Tice H."/>
            <person name="Pitluck S."/>
            <person name="Chain P."/>
            <person name="Malfatti S."/>
            <person name="Shin M."/>
            <person name="Vergez L."/>
            <person name="Schmutz J."/>
            <person name="Larimer F."/>
            <person name="Land M."/>
            <person name="Hauser L."/>
            <person name="Kyrpides N."/>
            <person name="Ivanova N."/>
            <person name="Tomasz A."/>
            <person name="Richardson P."/>
        </authorList>
    </citation>
    <scope>NUCLEOTIDE SEQUENCE [LARGE SCALE GENOMIC DNA]</scope>
    <source>
        <strain>JH1</strain>
    </source>
</reference>